<proteinExistence type="inferred from homology"/>
<accession>C0Q9X2</accession>
<reference key="1">
    <citation type="journal article" date="2009" name="Environ. Microbiol.">
        <title>Genome sequence of Desulfobacterium autotrophicum HRM2, a marine sulfate reducer oxidizing organic carbon completely to carbon dioxide.</title>
        <authorList>
            <person name="Strittmatter A.W."/>
            <person name="Liesegang H."/>
            <person name="Rabus R."/>
            <person name="Decker I."/>
            <person name="Amann J."/>
            <person name="Andres S."/>
            <person name="Henne A."/>
            <person name="Fricke W.F."/>
            <person name="Martinez-Arias R."/>
            <person name="Bartels D."/>
            <person name="Goesmann A."/>
            <person name="Krause L."/>
            <person name="Puehler A."/>
            <person name="Klenk H.P."/>
            <person name="Richter M."/>
            <person name="Schuler M."/>
            <person name="Gloeckner F.O."/>
            <person name="Meyerdierks A."/>
            <person name="Gottschalk G."/>
            <person name="Amann R."/>
        </authorList>
    </citation>
    <scope>NUCLEOTIDE SEQUENCE [LARGE SCALE GENOMIC DNA]</scope>
    <source>
        <strain>ATCC 43914 / DSM 3382 / VKM B-1955 / HRM2</strain>
    </source>
</reference>
<organism>
    <name type="scientific">Desulforapulum autotrophicum (strain ATCC 43914 / DSM 3382 / VKM B-1955 / HRM2)</name>
    <name type="common">Desulfobacterium autotrophicum</name>
    <dbReference type="NCBI Taxonomy" id="177437"/>
    <lineage>
        <taxon>Bacteria</taxon>
        <taxon>Pseudomonadati</taxon>
        <taxon>Thermodesulfobacteriota</taxon>
        <taxon>Desulfobacteria</taxon>
        <taxon>Desulfobacterales</taxon>
        <taxon>Desulfobacteraceae</taxon>
        <taxon>Desulforapulum</taxon>
    </lineage>
</organism>
<keyword id="KW-1185">Reference proteome</keyword>
<keyword id="KW-0687">Ribonucleoprotein</keyword>
<keyword id="KW-0689">Ribosomal protein</keyword>
<keyword id="KW-0694">RNA-binding</keyword>
<keyword id="KW-0699">rRNA-binding</keyword>
<name>RL4_DESAH</name>
<protein>
    <recommendedName>
        <fullName evidence="1">Large ribosomal subunit protein uL4</fullName>
    </recommendedName>
    <alternativeName>
        <fullName evidence="3">50S ribosomal protein L4</fullName>
    </alternativeName>
</protein>
<dbReference type="EMBL" id="CP001087">
    <property type="protein sequence ID" value="ACN16690.1"/>
    <property type="molecule type" value="Genomic_DNA"/>
</dbReference>
<dbReference type="RefSeq" id="WP_015905440.1">
    <property type="nucleotide sequence ID" value="NC_012108.1"/>
</dbReference>
<dbReference type="SMR" id="C0Q9X2"/>
<dbReference type="STRING" id="177437.HRM2_36250"/>
<dbReference type="KEGG" id="dat:HRM2_36250"/>
<dbReference type="eggNOG" id="COG0088">
    <property type="taxonomic scope" value="Bacteria"/>
</dbReference>
<dbReference type="HOGENOM" id="CLU_041575_5_2_7"/>
<dbReference type="OrthoDB" id="9803201at2"/>
<dbReference type="Proteomes" id="UP000000442">
    <property type="component" value="Chromosome"/>
</dbReference>
<dbReference type="GO" id="GO:1990904">
    <property type="term" value="C:ribonucleoprotein complex"/>
    <property type="evidence" value="ECO:0007669"/>
    <property type="project" value="UniProtKB-KW"/>
</dbReference>
<dbReference type="GO" id="GO:0005840">
    <property type="term" value="C:ribosome"/>
    <property type="evidence" value="ECO:0007669"/>
    <property type="project" value="UniProtKB-KW"/>
</dbReference>
<dbReference type="GO" id="GO:0019843">
    <property type="term" value="F:rRNA binding"/>
    <property type="evidence" value="ECO:0007669"/>
    <property type="project" value="UniProtKB-UniRule"/>
</dbReference>
<dbReference type="GO" id="GO:0003735">
    <property type="term" value="F:structural constituent of ribosome"/>
    <property type="evidence" value="ECO:0007669"/>
    <property type="project" value="InterPro"/>
</dbReference>
<dbReference type="GO" id="GO:0006412">
    <property type="term" value="P:translation"/>
    <property type="evidence" value="ECO:0007669"/>
    <property type="project" value="UniProtKB-UniRule"/>
</dbReference>
<dbReference type="Gene3D" id="3.40.1370.10">
    <property type="match status" value="1"/>
</dbReference>
<dbReference type="HAMAP" id="MF_01328_B">
    <property type="entry name" value="Ribosomal_uL4_B"/>
    <property type="match status" value="1"/>
</dbReference>
<dbReference type="InterPro" id="IPR002136">
    <property type="entry name" value="Ribosomal_uL4"/>
</dbReference>
<dbReference type="InterPro" id="IPR013005">
    <property type="entry name" value="Ribosomal_uL4-like"/>
</dbReference>
<dbReference type="InterPro" id="IPR023574">
    <property type="entry name" value="Ribosomal_uL4_dom_sf"/>
</dbReference>
<dbReference type="NCBIfam" id="TIGR03953">
    <property type="entry name" value="rplD_bact"/>
    <property type="match status" value="1"/>
</dbReference>
<dbReference type="PANTHER" id="PTHR10746">
    <property type="entry name" value="50S RIBOSOMAL PROTEIN L4"/>
    <property type="match status" value="1"/>
</dbReference>
<dbReference type="PANTHER" id="PTHR10746:SF6">
    <property type="entry name" value="LARGE RIBOSOMAL SUBUNIT PROTEIN UL4M"/>
    <property type="match status" value="1"/>
</dbReference>
<dbReference type="Pfam" id="PF00573">
    <property type="entry name" value="Ribosomal_L4"/>
    <property type="match status" value="1"/>
</dbReference>
<dbReference type="SUPFAM" id="SSF52166">
    <property type="entry name" value="Ribosomal protein L4"/>
    <property type="match status" value="1"/>
</dbReference>
<gene>
    <name evidence="1" type="primary">rplD</name>
    <name type="ordered locus">HRM2_36250</name>
</gene>
<comment type="function">
    <text evidence="1">One of the primary rRNA binding proteins, this protein initially binds near the 5'-end of the 23S rRNA. It is important during the early stages of 50S assembly. It makes multiple contacts with different domains of the 23S rRNA in the assembled 50S subunit and ribosome.</text>
</comment>
<comment type="function">
    <text evidence="1">Forms part of the polypeptide exit tunnel.</text>
</comment>
<comment type="subunit">
    <text evidence="1">Part of the 50S ribosomal subunit.</text>
</comment>
<comment type="similarity">
    <text evidence="1">Belongs to the universal ribosomal protein uL4 family.</text>
</comment>
<evidence type="ECO:0000255" key="1">
    <source>
        <dbReference type="HAMAP-Rule" id="MF_01328"/>
    </source>
</evidence>
<evidence type="ECO:0000256" key="2">
    <source>
        <dbReference type="SAM" id="MobiDB-lite"/>
    </source>
</evidence>
<evidence type="ECO:0000305" key="3"/>
<sequence length="207" mass="22717">MAAVDVLNRSGEKVSEAFLADEVFSIPVKKSVLHDVVRMQLARRRSGTAKSKGRSEVSGSTRKLYRQKGTGNARSGSVKSPLRRGGGVIFGPAPRSYAYAIPKKVRALALKMALSSKLAANELSVIDTFAMDSIKTKEFDSIIDHLGLKNTLIVIDGDDRNLVLSARNIPDVKVIRTEGLNVYDILKYDNLLLIESAIKEIEGRFTR</sequence>
<feature type="chain" id="PRO_1000214567" description="Large ribosomal subunit protein uL4">
    <location>
        <begin position="1"/>
        <end position="207"/>
    </location>
</feature>
<feature type="region of interest" description="Disordered" evidence="2">
    <location>
        <begin position="43"/>
        <end position="80"/>
    </location>
</feature>
<feature type="compositionally biased region" description="Polar residues" evidence="2">
    <location>
        <begin position="69"/>
        <end position="78"/>
    </location>
</feature>